<sequence>MPRSSLAQLAPLPRAFFNRDPRIVGRELLGKVLLRREGRAILAGRIVECEAYLGADDAAAHSAAGKTARNAVLFGPPGYAYVYFIYGNHFCLNVSCLPDGQAGGILFRALEPIAGVERMAANRQLEPSQLRLIASGPGRLAEALAVTRDRDNGKDMVSPKSDLRIVDDGFGAVEVRETPRIGITKSADLPLRYIVAGSPFVSGKRYL</sequence>
<name>3MGH_KORVE</name>
<accession>Q1IHD8</accession>
<proteinExistence type="inferred from homology"/>
<comment type="similarity">
    <text evidence="1">Belongs to the DNA glycosylase MPG family.</text>
</comment>
<organism>
    <name type="scientific">Koribacter versatilis (strain Ellin345)</name>
    <dbReference type="NCBI Taxonomy" id="204669"/>
    <lineage>
        <taxon>Bacteria</taxon>
        <taxon>Pseudomonadati</taxon>
        <taxon>Acidobacteriota</taxon>
        <taxon>Terriglobia</taxon>
        <taxon>Terriglobales</taxon>
        <taxon>Candidatus Korobacteraceae</taxon>
        <taxon>Candidatus Korobacter</taxon>
    </lineage>
</organism>
<evidence type="ECO:0000255" key="1">
    <source>
        <dbReference type="HAMAP-Rule" id="MF_00527"/>
    </source>
</evidence>
<protein>
    <recommendedName>
        <fullName evidence="1">Putative 3-methyladenine DNA glycosylase</fullName>
        <ecNumber evidence="1">3.2.2.-</ecNumber>
    </recommendedName>
</protein>
<keyword id="KW-0227">DNA damage</keyword>
<keyword id="KW-0234">DNA repair</keyword>
<keyword id="KW-0378">Hydrolase</keyword>
<keyword id="KW-1185">Reference proteome</keyword>
<dbReference type="EC" id="3.2.2.-" evidence="1"/>
<dbReference type="EMBL" id="CP000360">
    <property type="protein sequence ID" value="ABF43712.1"/>
    <property type="molecule type" value="Genomic_DNA"/>
</dbReference>
<dbReference type="RefSeq" id="WP_011525508.1">
    <property type="nucleotide sequence ID" value="NC_008009.1"/>
</dbReference>
<dbReference type="SMR" id="Q1IHD8"/>
<dbReference type="STRING" id="204669.Acid345_4712"/>
<dbReference type="EnsemblBacteria" id="ABF43712">
    <property type="protein sequence ID" value="ABF43712"/>
    <property type="gene ID" value="Acid345_4712"/>
</dbReference>
<dbReference type="KEGG" id="aba:Acid345_4712"/>
<dbReference type="eggNOG" id="COG2094">
    <property type="taxonomic scope" value="Bacteria"/>
</dbReference>
<dbReference type="HOGENOM" id="CLU_060471_3_0_0"/>
<dbReference type="OrthoDB" id="9794313at2"/>
<dbReference type="Proteomes" id="UP000002432">
    <property type="component" value="Chromosome"/>
</dbReference>
<dbReference type="GO" id="GO:0003905">
    <property type="term" value="F:alkylbase DNA N-glycosylase activity"/>
    <property type="evidence" value="ECO:0007669"/>
    <property type="project" value="InterPro"/>
</dbReference>
<dbReference type="GO" id="GO:0003677">
    <property type="term" value="F:DNA binding"/>
    <property type="evidence" value="ECO:0007669"/>
    <property type="project" value="InterPro"/>
</dbReference>
<dbReference type="GO" id="GO:0006284">
    <property type="term" value="P:base-excision repair"/>
    <property type="evidence" value="ECO:0007669"/>
    <property type="project" value="InterPro"/>
</dbReference>
<dbReference type="CDD" id="cd00540">
    <property type="entry name" value="AAG"/>
    <property type="match status" value="1"/>
</dbReference>
<dbReference type="FunFam" id="3.10.300.10:FF:000001">
    <property type="entry name" value="Putative 3-methyladenine DNA glycosylase"/>
    <property type="match status" value="1"/>
</dbReference>
<dbReference type="Gene3D" id="3.10.300.10">
    <property type="entry name" value="Methylpurine-DNA glycosylase (MPG)"/>
    <property type="match status" value="1"/>
</dbReference>
<dbReference type="HAMAP" id="MF_00527">
    <property type="entry name" value="3MGH"/>
    <property type="match status" value="1"/>
</dbReference>
<dbReference type="InterPro" id="IPR011034">
    <property type="entry name" value="Formyl_transferase-like_C_sf"/>
</dbReference>
<dbReference type="InterPro" id="IPR003180">
    <property type="entry name" value="MPG"/>
</dbReference>
<dbReference type="InterPro" id="IPR036995">
    <property type="entry name" value="MPG_sf"/>
</dbReference>
<dbReference type="NCBIfam" id="TIGR00567">
    <property type="entry name" value="3mg"/>
    <property type="match status" value="1"/>
</dbReference>
<dbReference type="NCBIfam" id="NF002003">
    <property type="entry name" value="PRK00802.1-3"/>
    <property type="match status" value="1"/>
</dbReference>
<dbReference type="PANTHER" id="PTHR10429">
    <property type="entry name" value="DNA-3-METHYLADENINE GLYCOSYLASE"/>
    <property type="match status" value="1"/>
</dbReference>
<dbReference type="PANTHER" id="PTHR10429:SF0">
    <property type="entry name" value="DNA-3-METHYLADENINE GLYCOSYLASE"/>
    <property type="match status" value="1"/>
</dbReference>
<dbReference type="Pfam" id="PF02245">
    <property type="entry name" value="Pur_DNA_glyco"/>
    <property type="match status" value="1"/>
</dbReference>
<dbReference type="SUPFAM" id="SSF50486">
    <property type="entry name" value="FMT C-terminal domain-like"/>
    <property type="match status" value="1"/>
</dbReference>
<feature type="chain" id="PRO_0000264992" description="Putative 3-methyladenine DNA glycosylase">
    <location>
        <begin position="1"/>
        <end position="207"/>
    </location>
</feature>
<reference key="1">
    <citation type="journal article" date="2009" name="Appl. Environ. Microbiol.">
        <title>Three genomes from the phylum Acidobacteria provide insight into the lifestyles of these microorganisms in soils.</title>
        <authorList>
            <person name="Ward N.L."/>
            <person name="Challacombe J.F."/>
            <person name="Janssen P.H."/>
            <person name="Henrissat B."/>
            <person name="Coutinho P.M."/>
            <person name="Wu M."/>
            <person name="Xie G."/>
            <person name="Haft D.H."/>
            <person name="Sait M."/>
            <person name="Badger J."/>
            <person name="Barabote R.D."/>
            <person name="Bradley B."/>
            <person name="Brettin T.S."/>
            <person name="Brinkac L.M."/>
            <person name="Bruce D."/>
            <person name="Creasy T."/>
            <person name="Daugherty S.C."/>
            <person name="Davidsen T.M."/>
            <person name="DeBoy R.T."/>
            <person name="Detter J.C."/>
            <person name="Dodson R.J."/>
            <person name="Durkin A.S."/>
            <person name="Ganapathy A."/>
            <person name="Gwinn-Giglio M."/>
            <person name="Han C.S."/>
            <person name="Khouri H."/>
            <person name="Kiss H."/>
            <person name="Kothari S.P."/>
            <person name="Madupu R."/>
            <person name="Nelson K.E."/>
            <person name="Nelson W.C."/>
            <person name="Paulsen I."/>
            <person name="Penn K."/>
            <person name="Ren Q."/>
            <person name="Rosovitz M.J."/>
            <person name="Selengut J.D."/>
            <person name="Shrivastava S."/>
            <person name="Sullivan S.A."/>
            <person name="Tapia R."/>
            <person name="Thompson L.S."/>
            <person name="Watkins K.L."/>
            <person name="Yang Q."/>
            <person name="Yu C."/>
            <person name="Zafar N."/>
            <person name="Zhou L."/>
            <person name="Kuske C.R."/>
        </authorList>
    </citation>
    <scope>NUCLEOTIDE SEQUENCE [LARGE SCALE GENOMIC DNA]</scope>
    <source>
        <strain>Ellin345</strain>
    </source>
</reference>
<gene>
    <name type="ordered locus">Acid345_4712</name>
</gene>